<reference key="1">
    <citation type="journal article" date="2007" name="Proc. Natl. Acad. Sci. U.S.A.">
        <title>Genome and proteome of long-chain alkane degrading Geobacillus thermodenitrificans NG80-2 isolated from a deep-subsurface oil reservoir.</title>
        <authorList>
            <person name="Feng L."/>
            <person name="Wang W."/>
            <person name="Cheng J."/>
            <person name="Ren Y."/>
            <person name="Zhao G."/>
            <person name="Gao C."/>
            <person name="Tang Y."/>
            <person name="Liu X."/>
            <person name="Han W."/>
            <person name="Peng X."/>
            <person name="Liu R."/>
            <person name="Wang L."/>
        </authorList>
    </citation>
    <scope>NUCLEOTIDE SEQUENCE [LARGE SCALE GENOMIC DNA]</scope>
    <source>
        <strain>NG80-2</strain>
    </source>
</reference>
<name>CH10_GEOTN</name>
<evidence type="ECO:0000255" key="1">
    <source>
        <dbReference type="HAMAP-Rule" id="MF_00580"/>
    </source>
</evidence>
<feature type="chain" id="PRO_1000025266" description="Co-chaperonin GroES">
    <location>
        <begin position="1"/>
        <end position="94"/>
    </location>
</feature>
<comment type="function">
    <text evidence="1">Together with the chaperonin GroEL, plays an essential role in assisting protein folding. The GroEL-GroES system forms a nano-cage that allows encapsulation of the non-native substrate proteins and provides a physical environment optimized to promote and accelerate protein folding. GroES binds to the apical surface of the GroEL ring, thereby capping the opening of the GroEL channel.</text>
</comment>
<comment type="subunit">
    <text evidence="1">Heptamer of 7 subunits arranged in a ring. Interacts with the chaperonin GroEL.</text>
</comment>
<comment type="subcellular location">
    <subcellularLocation>
        <location evidence="1">Cytoplasm</location>
    </subcellularLocation>
</comment>
<comment type="similarity">
    <text evidence="1">Belongs to the GroES chaperonin family.</text>
</comment>
<accession>A4IJV2</accession>
<protein>
    <recommendedName>
        <fullName evidence="1">Co-chaperonin GroES</fullName>
    </recommendedName>
    <alternativeName>
        <fullName evidence="1">10 kDa chaperonin</fullName>
    </alternativeName>
    <alternativeName>
        <fullName evidence="1">Chaperonin-10</fullName>
        <shortName evidence="1">Cpn10</shortName>
    </alternativeName>
</protein>
<sequence length="94" mass="10240">MLKPLGDRIVIEVVETEEKTASGIVLPDTAKEKPQEGRVVAVGTGRVLDNGQRVAPEVEVGDRIIFSKYAGTEVKYDGKEYLILRESDILAVIG</sequence>
<proteinExistence type="inferred from homology"/>
<keyword id="KW-0143">Chaperone</keyword>
<keyword id="KW-0963">Cytoplasm</keyword>
<dbReference type="EMBL" id="CP000557">
    <property type="protein sequence ID" value="ABO65606.1"/>
    <property type="molecule type" value="Genomic_DNA"/>
</dbReference>
<dbReference type="RefSeq" id="WP_008882016.1">
    <property type="nucleotide sequence ID" value="NC_009328.1"/>
</dbReference>
<dbReference type="SMR" id="A4IJV2"/>
<dbReference type="GeneID" id="87622175"/>
<dbReference type="KEGG" id="gtn:GTNG_0222"/>
<dbReference type="eggNOG" id="COG0234">
    <property type="taxonomic scope" value="Bacteria"/>
</dbReference>
<dbReference type="HOGENOM" id="CLU_132825_2_0_9"/>
<dbReference type="Proteomes" id="UP000001578">
    <property type="component" value="Chromosome"/>
</dbReference>
<dbReference type="GO" id="GO:0005737">
    <property type="term" value="C:cytoplasm"/>
    <property type="evidence" value="ECO:0007669"/>
    <property type="project" value="UniProtKB-SubCell"/>
</dbReference>
<dbReference type="GO" id="GO:0005524">
    <property type="term" value="F:ATP binding"/>
    <property type="evidence" value="ECO:0007669"/>
    <property type="project" value="InterPro"/>
</dbReference>
<dbReference type="GO" id="GO:0046872">
    <property type="term" value="F:metal ion binding"/>
    <property type="evidence" value="ECO:0007669"/>
    <property type="project" value="TreeGrafter"/>
</dbReference>
<dbReference type="GO" id="GO:0044183">
    <property type="term" value="F:protein folding chaperone"/>
    <property type="evidence" value="ECO:0007669"/>
    <property type="project" value="InterPro"/>
</dbReference>
<dbReference type="GO" id="GO:0051087">
    <property type="term" value="F:protein-folding chaperone binding"/>
    <property type="evidence" value="ECO:0007669"/>
    <property type="project" value="TreeGrafter"/>
</dbReference>
<dbReference type="GO" id="GO:0051082">
    <property type="term" value="F:unfolded protein binding"/>
    <property type="evidence" value="ECO:0007669"/>
    <property type="project" value="TreeGrafter"/>
</dbReference>
<dbReference type="GO" id="GO:0051085">
    <property type="term" value="P:chaperone cofactor-dependent protein refolding"/>
    <property type="evidence" value="ECO:0007669"/>
    <property type="project" value="TreeGrafter"/>
</dbReference>
<dbReference type="CDD" id="cd00320">
    <property type="entry name" value="cpn10"/>
    <property type="match status" value="1"/>
</dbReference>
<dbReference type="FunFam" id="2.30.33.40:FF:000001">
    <property type="entry name" value="10 kDa chaperonin"/>
    <property type="match status" value="1"/>
</dbReference>
<dbReference type="Gene3D" id="2.30.33.40">
    <property type="entry name" value="GroES chaperonin"/>
    <property type="match status" value="1"/>
</dbReference>
<dbReference type="HAMAP" id="MF_00580">
    <property type="entry name" value="CH10"/>
    <property type="match status" value="1"/>
</dbReference>
<dbReference type="InterPro" id="IPR020818">
    <property type="entry name" value="Chaperonin_GroES"/>
</dbReference>
<dbReference type="InterPro" id="IPR037124">
    <property type="entry name" value="Chaperonin_GroES_sf"/>
</dbReference>
<dbReference type="InterPro" id="IPR018369">
    <property type="entry name" value="Chaprnonin_Cpn10_CS"/>
</dbReference>
<dbReference type="InterPro" id="IPR011032">
    <property type="entry name" value="GroES-like_sf"/>
</dbReference>
<dbReference type="NCBIfam" id="NF001527">
    <property type="entry name" value="PRK00364.1-2"/>
    <property type="match status" value="1"/>
</dbReference>
<dbReference type="NCBIfam" id="NF001530">
    <property type="entry name" value="PRK00364.1-6"/>
    <property type="match status" value="1"/>
</dbReference>
<dbReference type="NCBIfam" id="NF001531">
    <property type="entry name" value="PRK00364.2-2"/>
    <property type="match status" value="1"/>
</dbReference>
<dbReference type="NCBIfam" id="NF001532">
    <property type="entry name" value="PRK00364.2-3"/>
    <property type="match status" value="1"/>
</dbReference>
<dbReference type="NCBIfam" id="NF001533">
    <property type="entry name" value="PRK00364.2-4"/>
    <property type="match status" value="1"/>
</dbReference>
<dbReference type="NCBIfam" id="NF001534">
    <property type="entry name" value="PRK00364.2-5"/>
    <property type="match status" value="1"/>
</dbReference>
<dbReference type="PANTHER" id="PTHR10772">
    <property type="entry name" value="10 KDA HEAT SHOCK PROTEIN"/>
    <property type="match status" value="1"/>
</dbReference>
<dbReference type="PANTHER" id="PTHR10772:SF58">
    <property type="entry name" value="CO-CHAPERONIN GROES"/>
    <property type="match status" value="1"/>
</dbReference>
<dbReference type="Pfam" id="PF00166">
    <property type="entry name" value="Cpn10"/>
    <property type="match status" value="1"/>
</dbReference>
<dbReference type="PRINTS" id="PR00297">
    <property type="entry name" value="CHAPERONIN10"/>
</dbReference>
<dbReference type="SMART" id="SM00883">
    <property type="entry name" value="Cpn10"/>
    <property type="match status" value="1"/>
</dbReference>
<dbReference type="SUPFAM" id="SSF50129">
    <property type="entry name" value="GroES-like"/>
    <property type="match status" value="1"/>
</dbReference>
<dbReference type="PROSITE" id="PS00681">
    <property type="entry name" value="CHAPERONINS_CPN10"/>
    <property type="match status" value="1"/>
</dbReference>
<organism>
    <name type="scientific">Geobacillus thermodenitrificans (strain NG80-2)</name>
    <dbReference type="NCBI Taxonomy" id="420246"/>
    <lineage>
        <taxon>Bacteria</taxon>
        <taxon>Bacillati</taxon>
        <taxon>Bacillota</taxon>
        <taxon>Bacilli</taxon>
        <taxon>Bacillales</taxon>
        <taxon>Anoxybacillaceae</taxon>
        <taxon>Geobacillus</taxon>
    </lineage>
</organism>
<gene>
    <name evidence="1" type="primary">groES</name>
    <name evidence="1" type="synonym">groS</name>
    <name type="ordered locus">GTNG_0222</name>
</gene>